<evidence type="ECO:0000255" key="1"/>
<evidence type="ECO:0000305" key="2"/>
<name>Y085_ABVP</name>
<comment type="subcellular location">
    <subcellularLocation>
        <location evidence="2">Host membrane</location>
        <topology evidence="2">Multi-pass membrane protein</topology>
    </subcellularLocation>
</comment>
<dbReference type="EMBL" id="EF432053">
    <property type="protein sequence ID" value="ABP73427.1"/>
    <property type="molecule type" value="Genomic_DNA"/>
</dbReference>
<dbReference type="RefSeq" id="YP_001210341.1">
    <property type="nucleotide sequence ID" value="NC_009452.1"/>
</dbReference>
<dbReference type="GeneID" id="5129832"/>
<dbReference type="KEGG" id="vg:5129832"/>
<dbReference type="Proteomes" id="UP000000513">
    <property type="component" value="Segment"/>
</dbReference>
<dbReference type="GO" id="GO:0033644">
    <property type="term" value="C:host cell membrane"/>
    <property type="evidence" value="ECO:0007669"/>
    <property type="project" value="UniProtKB-SubCell"/>
</dbReference>
<dbReference type="GO" id="GO:0016020">
    <property type="term" value="C:membrane"/>
    <property type="evidence" value="ECO:0007669"/>
    <property type="project" value="UniProtKB-KW"/>
</dbReference>
<sequence length="85" mass="8828">MVEIVGSNYFNFPPTTLIVLALGSAIAYKFLSNISTNPYVPAVLGIILVFLGHGGVISTIGAGITGLAISRAIGKDVFNFLSKVS</sequence>
<protein>
    <recommendedName>
        <fullName>Putative transmembrane protein ORF85</fullName>
    </recommendedName>
</protein>
<feature type="chain" id="PRO_0000384838" description="Putative transmembrane protein ORF85">
    <location>
        <begin position="1"/>
        <end position="85"/>
    </location>
</feature>
<feature type="transmembrane region" description="Helical" evidence="1">
    <location>
        <begin position="12"/>
        <end position="32"/>
    </location>
</feature>
<feature type="transmembrane region" description="Helical" evidence="1">
    <location>
        <begin position="44"/>
        <end position="64"/>
    </location>
</feature>
<gene>
    <name type="ORF">ORF85</name>
</gene>
<keyword id="KW-1043">Host membrane</keyword>
<keyword id="KW-0472">Membrane</keyword>
<keyword id="KW-1185">Reference proteome</keyword>
<keyword id="KW-0812">Transmembrane</keyword>
<keyword id="KW-1133">Transmembrane helix</keyword>
<organismHost>
    <name type="scientific">Acidianus convivator</name>
    <dbReference type="NCBI Taxonomy" id="269667"/>
</organismHost>
<accession>A4ZUC3</accession>
<reference key="1">
    <citation type="journal article" date="2007" name="Virology">
        <title>Genome of the Acidianus bottle-shaped virus and insights into the replication and packaging mechanisms.</title>
        <authorList>
            <person name="Peng X."/>
            <person name="Basta T."/>
            <person name="Haring M."/>
            <person name="Garrett R.A."/>
            <person name="Prangishvili D."/>
        </authorList>
    </citation>
    <scope>NUCLEOTIDE SEQUENCE [GENOMIC DNA]</scope>
</reference>
<proteinExistence type="predicted"/>
<organism>
    <name type="scientific">Acidianus bottle-shaped virus (isolate Italy/Pozzuoli)</name>
    <name type="common">ABV</name>
    <dbReference type="NCBI Taxonomy" id="654911"/>
    <lineage>
        <taxon>Viruses</taxon>
        <taxon>Viruses incertae sedis</taxon>
        <taxon>Ampullaviridae</taxon>
        <taxon>Bottigliavirus</taxon>
        <taxon>Bottigliavirus ABV</taxon>
    </lineage>
</organism>